<accession>P85546</accession>
<feature type="peptide" id="PRO_0000378634" description="Hypertrehalosaemic factor" evidence="3">
    <location>
        <begin position="1"/>
        <end position="10"/>
    </location>
</feature>
<feature type="modified residue" description="Pyrrolidone carboxylic acid" evidence="3">
    <location>
        <position position="1"/>
    </location>
</feature>
<feature type="modified residue" description="Threonine amide" evidence="3">
    <location>
        <position position="10"/>
    </location>
</feature>
<dbReference type="GO" id="GO:0005576">
    <property type="term" value="C:extracellular region"/>
    <property type="evidence" value="ECO:0007669"/>
    <property type="project" value="UniProtKB-SubCell"/>
</dbReference>
<dbReference type="GO" id="GO:0005179">
    <property type="term" value="F:hormone activity"/>
    <property type="evidence" value="ECO:0007669"/>
    <property type="project" value="UniProtKB-KW"/>
</dbReference>
<dbReference type="GO" id="GO:0007218">
    <property type="term" value="P:neuropeptide signaling pathway"/>
    <property type="evidence" value="ECO:0007669"/>
    <property type="project" value="UniProtKB-KW"/>
</dbReference>
<dbReference type="InterPro" id="IPR002047">
    <property type="entry name" value="Adipokinetic_hormone_CS"/>
</dbReference>
<dbReference type="PROSITE" id="PS00256">
    <property type="entry name" value="AKH"/>
    <property type="match status" value="1"/>
</dbReference>
<organism>
    <name type="scientific">Blaberus craniifer</name>
    <name type="common">Death's head cockroach</name>
    <dbReference type="NCBI Taxonomy" id="6982"/>
    <lineage>
        <taxon>Eukaryota</taxon>
        <taxon>Metazoa</taxon>
        <taxon>Ecdysozoa</taxon>
        <taxon>Arthropoda</taxon>
        <taxon>Hexapoda</taxon>
        <taxon>Insecta</taxon>
        <taxon>Pterygota</taxon>
        <taxon>Neoptera</taxon>
        <taxon>Polyneoptera</taxon>
        <taxon>Dictyoptera</taxon>
        <taxon>Blattodea</taxon>
        <taxon>Blaberoidea</taxon>
        <taxon>Blaberidae</taxon>
        <taxon>Blaberinae</taxon>
        <taxon>Blaberus</taxon>
    </lineage>
</organism>
<proteinExistence type="evidence at protein level"/>
<sequence length="10" mass="1092">QVNFSPGWGT</sequence>
<reference evidence="5" key="1">
    <citation type="journal article" date="2009" name="BMC Evol. Biol.">
        <title>A proteomic approach for studying insect phylogeny: CAPA peptides of ancient insect taxa (Dictyoptera, Blattoptera) as a test case.</title>
        <authorList>
            <person name="Roth S."/>
            <person name="Fromm B."/>
            <person name="Gaede G."/>
            <person name="Predel R."/>
        </authorList>
    </citation>
    <scope>PROTEIN SEQUENCE</scope>
    <scope>PYROGLUTAMATE FORMATION AT GLN-1</scope>
    <scope>AMIDATION AT THR-10</scope>
    <source>
        <tissue evidence="3">Corpora cardiaca</tissue>
    </source>
</reference>
<comment type="function">
    <text evidence="5">Hypertrehalosaemic factors are neuropeptides that elevate the level of trehalose in the hemolymph (trehalose is the major carbohydrate in the hemolymph of insects).</text>
</comment>
<comment type="subcellular location">
    <subcellularLocation>
        <location evidence="5">Secreted</location>
    </subcellularLocation>
</comment>
<comment type="similarity">
    <text evidence="2">Belongs to the AKH/HRTH/RPCH family.</text>
</comment>
<evidence type="ECO:0000250" key="1">
    <source>
        <dbReference type="UniProtKB" id="P67790"/>
    </source>
</evidence>
<evidence type="ECO:0000255" key="2"/>
<evidence type="ECO:0000269" key="3">
    <source>
    </source>
</evidence>
<evidence type="ECO:0000303" key="4">
    <source>
    </source>
</evidence>
<evidence type="ECO:0000305" key="5"/>
<protein>
    <recommendedName>
        <fullName evidence="1">Hypertrehalosaemic factor</fullName>
    </recommendedName>
    <alternativeName>
        <fullName evidence="4">Adipokinetic hormone 1</fullName>
        <shortName evidence="4">BlaCr-AKH-1</shortName>
    </alternativeName>
    <alternativeName>
        <fullName evidence="1">Hypertrehalosaemic neuropeptide</fullName>
    </alternativeName>
</protein>
<keyword id="KW-0027">Amidation</keyword>
<keyword id="KW-0903">Direct protein sequencing</keyword>
<keyword id="KW-0372">Hormone</keyword>
<keyword id="KW-0527">Neuropeptide</keyword>
<keyword id="KW-0873">Pyrrolidone carboxylic acid</keyword>
<keyword id="KW-0964">Secreted</keyword>
<name>HTF_BLACR</name>